<reference key="1">
    <citation type="journal article" date="2011" name="J. Bacteriol.">
        <title>Genome sequence of lineage III Listeria monocytogenes strain HCC23.</title>
        <authorList>
            <person name="Steele C.L."/>
            <person name="Donaldson J.R."/>
            <person name="Paul D."/>
            <person name="Banes M.M."/>
            <person name="Arick T."/>
            <person name="Bridges S.M."/>
            <person name="Lawrence M.L."/>
        </authorList>
    </citation>
    <scope>NUCLEOTIDE SEQUENCE [LARGE SCALE GENOMIC DNA]</scope>
    <source>
        <strain>HCC23</strain>
    </source>
</reference>
<accession>B8DB23</accession>
<sequence length="178" mass="19400">MSRIGKKTIVIPAGVTVTLNGSTATVKGPKGELVKEFNPEITIKIEGNEINVSRPTDNKNHRALHGTTRAILNNMVVGVSEGYEKKLELIGVGYRAQKQGDKLVLNVGYSHPVEFVAPKGVDIEVPANTQVIVKGYNKEHVGELAANIRAVRPPEPYKGKGIRYEGEHVRRKEGKTGK</sequence>
<organism>
    <name type="scientific">Listeria monocytogenes serotype 4a (strain HCC23)</name>
    <dbReference type="NCBI Taxonomy" id="552536"/>
    <lineage>
        <taxon>Bacteria</taxon>
        <taxon>Bacillati</taxon>
        <taxon>Bacillota</taxon>
        <taxon>Bacilli</taxon>
        <taxon>Bacillales</taxon>
        <taxon>Listeriaceae</taxon>
        <taxon>Listeria</taxon>
    </lineage>
</organism>
<evidence type="ECO:0000255" key="1">
    <source>
        <dbReference type="HAMAP-Rule" id="MF_01365"/>
    </source>
</evidence>
<evidence type="ECO:0000305" key="2"/>
<feature type="chain" id="PRO_1000166816" description="Large ribosomal subunit protein uL6">
    <location>
        <begin position="1"/>
        <end position="178"/>
    </location>
</feature>
<gene>
    <name evidence="1" type="primary">rplF</name>
    <name type="ordered locus">LMHCC_2917</name>
</gene>
<dbReference type="EMBL" id="CP001175">
    <property type="protein sequence ID" value="ACK41248.1"/>
    <property type="molecule type" value="Genomic_DNA"/>
</dbReference>
<dbReference type="RefSeq" id="WP_003723683.1">
    <property type="nucleotide sequence ID" value="NC_011660.1"/>
</dbReference>
<dbReference type="SMR" id="B8DB23"/>
<dbReference type="KEGG" id="lmh:LMHCC_2917"/>
<dbReference type="HOGENOM" id="CLU_065464_1_2_9"/>
<dbReference type="GO" id="GO:0022625">
    <property type="term" value="C:cytosolic large ribosomal subunit"/>
    <property type="evidence" value="ECO:0007669"/>
    <property type="project" value="TreeGrafter"/>
</dbReference>
<dbReference type="GO" id="GO:0019843">
    <property type="term" value="F:rRNA binding"/>
    <property type="evidence" value="ECO:0007669"/>
    <property type="project" value="UniProtKB-UniRule"/>
</dbReference>
<dbReference type="GO" id="GO:0003735">
    <property type="term" value="F:structural constituent of ribosome"/>
    <property type="evidence" value="ECO:0007669"/>
    <property type="project" value="InterPro"/>
</dbReference>
<dbReference type="GO" id="GO:0002181">
    <property type="term" value="P:cytoplasmic translation"/>
    <property type="evidence" value="ECO:0007669"/>
    <property type="project" value="TreeGrafter"/>
</dbReference>
<dbReference type="FunFam" id="3.90.930.12:FF:000001">
    <property type="entry name" value="50S ribosomal protein L6"/>
    <property type="match status" value="1"/>
</dbReference>
<dbReference type="FunFam" id="3.90.930.12:FF:000002">
    <property type="entry name" value="50S ribosomal protein L6"/>
    <property type="match status" value="1"/>
</dbReference>
<dbReference type="Gene3D" id="3.90.930.12">
    <property type="entry name" value="Ribosomal protein L6, alpha-beta domain"/>
    <property type="match status" value="2"/>
</dbReference>
<dbReference type="HAMAP" id="MF_01365_B">
    <property type="entry name" value="Ribosomal_uL6_B"/>
    <property type="match status" value="1"/>
</dbReference>
<dbReference type="InterPro" id="IPR000702">
    <property type="entry name" value="Ribosomal_uL6-like"/>
</dbReference>
<dbReference type="InterPro" id="IPR036789">
    <property type="entry name" value="Ribosomal_uL6-like_a/b-dom_sf"/>
</dbReference>
<dbReference type="InterPro" id="IPR020040">
    <property type="entry name" value="Ribosomal_uL6_a/b-dom"/>
</dbReference>
<dbReference type="InterPro" id="IPR019906">
    <property type="entry name" value="Ribosomal_uL6_bac-type"/>
</dbReference>
<dbReference type="InterPro" id="IPR002358">
    <property type="entry name" value="Ribosomal_uL6_CS"/>
</dbReference>
<dbReference type="NCBIfam" id="TIGR03654">
    <property type="entry name" value="L6_bact"/>
    <property type="match status" value="1"/>
</dbReference>
<dbReference type="PANTHER" id="PTHR11655">
    <property type="entry name" value="60S/50S RIBOSOMAL PROTEIN L6/L9"/>
    <property type="match status" value="1"/>
</dbReference>
<dbReference type="PANTHER" id="PTHR11655:SF14">
    <property type="entry name" value="LARGE RIBOSOMAL SUBUNIT PROTEIN UL6M"/>
    <property type="match status" value="1"/>
</dbReference>
<dbReference type="Pfam" id="PF00347">
    <property type="entry name" value="Ribosomal_L6"/>
    <property type="match status" value="2"/>
</dbReference>
<dbReference type="PIRSF" id="PIRSF002162">
    <property type="entry name" value="Ribosomal_L6"/>
    <property type="match status" value="1"/>
</dbReference>
<dbReference type="PRINTS" id="PR00059">
    <property type="entry name" value="RIBOSOMALL6"/>
</dbReference>
<dbReference type="SUPFAM" id="SSF56053">
    <property type="entry name" value="Ribosomal protein L6"/>
    <property type="match status" value="2"/>
</dbReference>
<dbReference type="PROSITE" id="PS00525">
    <property type="entry name" value="RIBOSOMAL_L6_1"/>
    <property type="match status" value="1"/>
</dbReference>
<keyword id="KW-0687">Ribonucleoprotein</keyword>
<keyword id="KW-0689">Ribosomal protein</keyword>
<keyword id="KW-0694">RNA-binding</keyword>
<keyword id="KW-0699">rRNA-binding</keyword>
<comment type="function">
    <text evidence="1">This protein binds to the 23S rRNA, and is important in its secondary structure. It is located near the subunit interface in the base of the L7/L12 stalk, and near the tRNA binding site of the peptidyltransferase center.</text>
</comment>
<comment type="subunit">
    <text evidence="1">Part of the 50S ribosomal subunit.</text>
</comment>
<comment type="similarity">
    <text evidence="1">Belongs to the universal ribosomal protein uL6 family.</text>
</comment>
<name>RL6_LISMH</name>
<proteinExistence type="inferred from homology"/>
<protein>
    <recommendedName>
        <fullName evidence="1">Large ribosomal subunit protein uL6</fullName>
    </recommendedName>
    <alternativeName>
        <fullName evidence="2">50S ribosomal protein L6</fullName>
    </alternativeName>
</protein>